<gene>
    <name evidence="1" type="primary">rnhB</name>
    <name type="ordered locus">BURPS1710b_2568</name>
</gene>
<comment type="function">
    <text evidence="1">Endonuclease that specifically degrades the RNA of RNA-DNA hybrids.</text>
</comment>
<comment type="catalytic activity">
    <reaction evidence="1">
        <text>Endonucleolytic cleavage to 5'-phosphomonoester.</text>
        <dbReference type="EC" id="3.1.26.4"/>
    </reaction>
</comment>
<comment type="cofactor">
    <cofactor evidence="1">
        <name>Mn(2+)</name>
        <dbReference type="ChEBI" id="CHEBI:29035"/>
    </cofactor>
    <cofactor evidence="1">
        <name>Mg(2+)</name>
        <dbReference type="ChEBI" id="CHEBI:18420"/>
    </cofactor>
    <text evidence="1">Manganese or magnesium. Binds 1 divalent metal ion per monomer in the absence of substrate. May bind a second metal ion after substrate binding.</text>
</comment>
<comment type="subcellular location">
    <subcellularLocation>
        <location evidence="1">Cytoplasm</location>
    </subcellularLocation>
</comment>
<comment type="similarity">
    <text evidence="1">Belongs to the RNase HII family.</text>
</comment>
<reference key="1">
    <citation type="journal article" date="2010" name="Genome Biol. Evol.">
        <title>Continuing evolution of Burkholderia mallei through genome reduction and large-scale rearrangements.</title>
        <authorList>
            <person name="Losada L."/>
            <person name="Ronning C.M."/>
            <person name="DeShazer D."/>
            <person name="Woods D."/>
            <person name="Fedorova N."/>
            <person name="Kim H.S."/>
            <person name="Shabalina S.A."/>
            <person name="Pearson T.R."/>
            <person name="Brinkac L."/>
            <person name="Tan P."/>
            <person name="Nandi T."/>
            <person name="Crabtree J."/>
            <person name="Badger J."/>
            <person name="Beckstrom-Sternberg S."/>
            <person name="Saqib M."/>
            <person name="Schutzer S.E."/>
            <person name="Keim P."/>
            <person name="Nierman W.C."/>
        </authorList>
    </citation>
    <scope>NUCLEOTIDE SEQUENCE [LARGE SCALE GENOMIC DNA]</scope>
    <source>
        <strain>1710b</strain>
    </source>
</reference>
<keyword id="KW-0963">Cytoplasm</keyword>
<keyword id="KW-0255">Endonuclease</keyword>
<keyword id="KW-0378">Hydrolase</keyword>
<keyword id="KW-0464">Manganese</keyword>
<keyword id="KW-0479">Metal-binding</keyword>
<keyword id="KW-0540">Nuclease</keyword>
<protein>
    <recommendedName>
        <fullName evidence="1">Ribonuclease HII</fullName>
        <shortName evidence="1">RNase HII</shortName>
        <ecNumber evidence="1">3.1.26.4</ecNumber>
    </recommendedName>
</protein>
<evidence type="ECO:0000255" key="1">
    <source>
        <dbReference type="HAMAP-Rule" id="MF_00052"/>
    </source>
</evidence>
<evidence type="ECO:0000255" key="2">
    <source>
        <dbReference type="PROSITE-ProRule" id="PRU01319"/>
    </source>
</evidence>
<proteinExistence type="inferred from homology"/>
<organism>
    <name type="scientific">Burkholderia pseudomallei (strain 1710b)</name>
    <dbReference type="NCBI Taxonomy" id="320372"/>
    <lineage>
        <taxon>Bacteria</taxon>
        <taxon>Pseudomonadati</taxon>
        <taxon>Pseudomonadota</taxon>
        <taxon>Betaproteobacteria</taxon>
        <taxon>Burkholderiales</taxon>
        <taxon>Burkholderiaceae</taxon>
        <taxon>Burkholderia</taxon>
        <taxon>pseudomallei group</taxon>
    </lineage>
</organism>
<dbReference type="EC" id="3.1.26.4" evidence="1"/>
<dbReference type="EMBL" id="CP000124">
    <property type="protein sequence ID" value="ABA48844.1"/>
    <property type="molecule type" value="Genomic_DNA"/>
</dbReference>
<dbReference type="RefSeq" id="WP_004527286.1">
    <property type="nucleotide sequence ID" value="NC_007434.1"/>
</dbReference>
<dbReference type="SMR" id="Q3JR43"/>
<dbReference type="EnsemblBacteria" id="ABA48844">
    <property type="protein sequence ID" value="ABA48844"/>
    <property type="gene ID" value="BURPS1710b_2568"/>
</dbReference>
<dbReference type="KEGG" id="bpm:BURPS1710b_2568"/>
<dbReference type="HOGENOM" id="CLU_036532_3_2_4"/>
<dbReference type="Proteomes" id="UP000002700">
    <property type="component" value="Chromosome I"/>
</dbReference>
<dbReference type="GO" id="GO:0005737">
    <property type="term" value="C:cytoplasm"/>
    <property type="evidence" value="ECO:0007669"/>
    <property type="project" value="UniProtKB-SubCell"/>
</dbReference>
<dbReference type="GO" id="GO:0032299">
    <property type="term" value="C:ribonuclease H2 complex"/>
    <property type="evidence" value="ECO:0007669"/>
    <property type="project" value="TreeGrafter"/>
</dbReference>
<dbReference type="GO" id="GO:0030145">
    <property type="term" value="F:manganese ion binding"/>
    <property type="evidence" value="ECO:0007669"/>
    <property type="project" value="UniProtKB-UniRule"/>
</dbReference>
<dbReference type="GO" id="GO:0003723">
    <property type="term" value="F:RNA binding"/>
    <property type="evidence" value="ECO:0007669"/>
    <property type="project" value="InterPro"/>
</dbReference>
<dbReference type="GO" id="GO:0004523">
    <property type="term" value="F:RNA-DNA hybrid ribonuclease activity"/>
    <property type="evidence" value="ECO:0007669"/>
    <property type="project" value="UniProtKB-UniRule"/>
</dbReference>
<dbReference type="GO" id="GO:0043137">
    <property type="term" value="P:DNA replication, removal of RNA primer"/>
    <property type="evidence" value="ECO:0007669"/>
    <property type="project" value="TreeGrafter"/>
</dbReference>
<dbReference type="GO" id="GO:0006298">
    <property type="term" value="P:mismatch repair"/>
    <property type="evidence" value="ECO:0007669"/>
    <property type="project" value="TreeGrafter"/>
</dbReference>
<dbReference type="CDD" id="cd07182">
    <property type="entry name" value="RNase_HII_bacteria_HII_like"/>
    <property type="match status" value="1"/>
</dbReference>
<dbReference type="FunFam" id="3.30.420.10:FF:000006">
    <property type="entry name" value="Ribonuclease HII"/>
    <property type="match status" value="1"/>
</dbReference>
<dbReference type="Gene3D" id="3.30.420.10">
    <property type="entry name" value="Ribonuclease H-like superfamily/Ribonuclease H"/>
    <property type="match status" value="1"/>
</dbReference>
<dbReference type="HAMAP" id="MF_00052_B">
    <property type="entry name" value="RNase_HII_B"/>
    <property type="match status" value="1"/>
</dbReference>
<dbReference type="InterPro" id="IPR022898">
    <property type="entry name" value="RNase_HII"/>
</dbReference>
<dbReference type="InterPro" id="IPR001352">
    <property type="entry name" value="RNase_HII/HIII"/>
</dbReference>
<dbReference type="InterPro" id="IPR024567">
    <property type="entry name" value="RNase_HII/HIII_dom"/>
</dbReference>
<dbReference type="InterPro" id="IPR012337">
    <property type="entry name" value="RNaseH-like_sf"/>
</dbReference>
<dbReference type="InterPro" id="IPR036397">
    <property type="entry name" value="RNaseH_sf"/>
</dbReference>
<dbReference type="NCBIfam" id="NF000594">
    <property type="entry name" value="PRK00015.1-1"/>
    <property type="match status" value="1"/>
</dbReference>
<dbReference type="NCBIfam" id="NF000595">
    <property type="entry name" value="PRK00015.1-3"/>
    <property type="match status" value="1"/>
</dbReference>
<dbReference type="NCBIfam" id="NF000596">
    <property type="entry name" value="PRK00015.1-4"/>
    <property type="match status" value="1"/>
</dbReference>
<dbReference type="PANTHER" id="PTHR10954">
    <property type="entry name" value="RIBONUCLEASE H2 SUBUNIT A"/>
    <property type="match status" value="1"/>
</dbReference>
<dbReference type="PANTHER" id="PTHR10954:SF18">
    <property type="entry name" value="RIBONUCLEASE HII"/>
    <property type="match status" value="1"/>
</dbReference>
<dbReference type="Pfam" id="PF01351">
    <property type="entry name" value="RNase_HII"/>
    <property type="match status" value="1"/>
</dbReference>
<dbReference type="SUPFAM" id="SSF53098">
    <property type="entry name" value="Ribonuclease H-like"/>
    <property type="match status" value="1"/>
</dbReference>
<dbReference type="PROSITE" id="PS51975">
    <property type="entry name" value="RNASE_H_2"/>
    <property type="match status" value="1"/>
</dbReference>
<sequence>MATTRKPRGGAGGATQPALDFDAPGEIVCGVDEAGRGPLAGPVVAAAVVLDPARPIVGLDDSKALSAKKRERLFDEIVAHALAYSVASASVEEIDSLNILHATMLAMKRAVEGLSVLPTLAKIDGNRCPMLAIRSEAIVGGDALVPSISAASILAKVTRDRTLVELHQQFPMYGFDAHAGYGTPQHLAALREHGPCEHHRRSFAPVREAFDLIR</sequence>
<accession>Q3JR43</accession>
<feature type="chain" id="PRO_0000235707" description="Ribonuclease HII">
    <location>
        <begin position="1"/>
        <end position="214"/>
    </location>
</feature>
<feature type="domain" description="RNase H type-2" evidence="2">
    <location>
        <begin position="26"/>
        <end position="214"/>
    </location>
</feature>
<feature type="binding site" evidence="1">
    <location>
        <position position="32"/>
    </location>
    <ligand>
        <name>a divalent metal cation</name>
        <dbReference type="ChEBI" id="CHEBI:60240"/>
    </ligand>
</feature>
<feature type="binding site" evidence="1">
    <location>
        <position position="33"/>
    </location>
    <ligand>
        <name>a divalent metal cation</name>
        <dbReference type="ChEBI" id="CHEBI:60240"/>
    </ligand>
</feature>
<feature type="binding site" evidence="1">
    <location>
        <position position="124"/>
    </location>
    <ligand>
        <name>a divalent metal cation</name>
        <dbReference type="ChEBI" id="CHEBI:60240"/>
    </ligand>
</feature>
<name>RNH2_BURP1</name>